<feature type="chain" id="PRO_0000257597" description="Putative pre-16S rRNA nuclease">
    <location>
        <begin position="1"/>
        <end position="142"/>
    </location>
</feature>
<dbReference type="EC" id="3.1.-.-" evidence="1"/>
<dbReference type="EMBL" id="AP006716">
    <property type="protein sequence ID" value="BAE04612.1"/>
    <property type="molecule type" value="Genomic_DNA"/>
</dbReference>
<dbReference type="SMR" id="Q4L6W3"/>
<dbReference type="KEGG" id="sha:SH1303"/>
<dbReference type="eggNOG" id="COG0816">
    <property type="taxonomic scope" value="Bacteria"/>
</dbReference>
<dbReference type="HOGENOM" id="CLU_098240_2_0_9"/>
<dbReference type="OrthoDB" id="9796140at2"/>
<dbReference type="Proteomes" id="UP000000543">
    <property type="component" value="Chromosome"/>
</dbReference>
<dbReference type="GO" id="GO:0005829">
    <property type="term" value="C:cytosol"/>
    <property type="evidence" value="ECO:0007669"/>
    <property type="project" value="TreeGrafter"/>
</dbReference>
<dbReference type="GO" id="GO:0004518">
    <property type="term" value="F:nuclease activity"/>
    <property type="evidence" value="ECO:0007669"/>
    <property type="project" value="UniProtKB-KW"/>
</dbReference>
<dbReference type="GO" id="GO:0000967">
    <property type="term" value="P:rRNA 5'-end processing"/>
    <property type="evidence" value="ECO:0007669"/>
    <property type="project" value="UniProtKB-UniRule"/>
</dbReference>
<dbReference type="CDD" id="cd16964">
    <property type="entry name" value="YqgF"/>
    <property type="match status" value="1"/>
</dbReference>
<dbReference type="FunFam" id="3.30.420.140:FF:000003">
    <property type="entry name" value="Putative pre-16S rRNA nuclease"/>
    <property type="match status" value="1"/>
</dbReference>
<dbReference type="Gene3D" id="3.30.420.140">
    <property type="entry name" value="YqgF/RNase H-like domain"/>
    <property type="match status" value="1"/>
</dbReference>
<dbReference type="HAMAP" id="MF_00651">
    <property type="entry name" value="Nuclease_YqgF"/>
    <property type="match status" value="1"/>
</dbReference>
<dbReference type="InterPro" id="IPR012337">
    <property type="entry name" value="RNaseH-like_sf"/>
</dbReference>
<dbReference type="InterPro" id="IPR005227">
    <property type="entry name" value="YqgF"/>
</dbReference>
<dbReference type="InterPro" id="IPR006641">
    <property type="entry name" value="YqgF/RNaseH-like_dom"/>
</dbReference>
<dbReference type="InterPro" id="IPR037027">
    <property type="entry name" value="YqgF/RNaseH-like_dom_sf"/>
</dbReference>
<dbReference type="NCBIfam" id="TIGR00250">
    <property type="entry name" value="RNAse_H_YqgF"/>
    <property type="match status" value="1"/>
</dbReference>
<dbReference type="PANTHER" id="PTHR33317">
    <property type="entry name" value="POLYNUCLEOTIDYL TRANSFERASE, RIBONUCLEASE H-LIKE SUPERFAMILY PROTEIN"/>
    <property type="match status" value="1"/>
</dbReference>
<dbReference type="PANTHER" id="PTHR33317:SF4">
    <property type="entry name" value="POLYNUCLEOTIDYL TRANSFERASE, RIBONUCLEASE H-LIKE SUPERFAMILY PROTEIN"/>
    <property type="match status" value="1"/>
</dbReference>
<dbReference type="Pfam" id="PF03652">
    <property type="entry name" value="RuvX"/>
    <property type="match status" value="1"/>
</dbReference>
<dbReference type="SMART" id="SM00732">
    <property type="entry name" value="YqgFc"/>
    <property type="match status" value="1"/>
</dbReference>
<dbReference type="SUPFAM" id="SSF53098">
    <property type="entry name" value="Ribonuclease H-like"/>
    <property type="match status" value="1"/>
</dbReference>
<organism>
    <name type="scientific">Staphylococcus haemolyticus (strain JCSC1435)</name>
    <dbReference type="NCBI Taxonomy" id="279808"/>
    <lineage>
        <taxon>Bacteria</taxon>
        <taxon>Bacillati</taxon>
        <taxon>Bacillota</taxon>
        <taxon>Bacilli</taxon>
        <taxon>Bacillales</taxon>
        <taxon>Staphylococcaceae</taxon>
        <taxon>Staphylococcus</taxon>
    </lineage>
</organism>
<name>YQGF_STAHJ</name>
<gene>
    <name type="ordered locus">SH1303</name>
</gene>
<reference key="1">
    <citation type="journal article" date="2005" name="J. Bacteriol.">
        <title>Whole-genome sequencing of Staphylococcus haemolyticus uncovers the extreme plasticity of its genome and the evolution of human-colonizing staphylococcal species.</title>
        <authorList>
            <person name="Takeuchi F."/>
            <person name="Watanabe S."/>
            <person name="Baba T."/>
            <person name="Yuzawa H."/>
            <person name="Ito T."/>
            <person name="Morimoto Y."/>
            <person name="Kuroda M."/>
            <person name="Cui L."/>
            <person name="Takahashi M."/>
            <person name="Ankai A."/>
            <person name="Baba S."/>
            <person name="Fukui S."/>
            <person name="Lee J.C."/>
            <person name="Hiramatsu K."/>
        </authorList>
    </citation>
    <scope>NUCLEOTIDE SEQUENCE [LARGE SCALE GENOMIC DNA]</scope>
    <source>
        <strain>JCSC1435</strain>
    </source>
</reference>
<protein>
    <recommendedName>
        <fullName evidence="1">Putative pre-16S rRNA nuclease</fullName>
        <ecNumber evidence="1">3.1.-.-</ecNumber>
    </recommendedName>
</protein>
<proteinExistence type="inferred from homology"/>
<evidence type="ECO:0000255" key="1">
    <source>
        <dbReference type="HAMAP-Rule" id="MF_00651"/>
    </source>
</evidence>
<comment type="function">
    <text evidence="1">Could be a nuclease involved in processing of the 5'-end of pre-16S rRNA.</text>
</comment>
<comment type="subcellular location">
    <subcellularLocation>
        <location evidence="1">Cytoplasm</location>
    </subcellularLocation>
</comment>
<comment type="similarity">
    <text evidence="1">Belongs to the YqgF nuclease family.</text>
</comment>
<accession>Q4L6W3</accession>
<keyword id="KW-0963">Cytoplasm</keyword>
<keyword id="KW-0378">Hydrolase</keyword>
<keyword id="KW-0540">Nuclease</keyword>
<keyword id="KW-0690">Ribosome biogenesis</keyword>
<sequence>MLTHKILGLDVGSKTVGVAISDLMGWTAQGLDTLRINEELEDYGIEQLVTIIKENNVGSVVIGLPKNMNNSIGFRGEASLRYKELLKESLPDIEIIMWDERLSTMAAERSLLEADVSRQKRKKVIDKMAAVFILQGYLDSIQ</sequence>